<proteinExistence type="inferred from homology"/>
<feature type="chain" id="PRO_1000084550" description="tRNA pseudouridine synthase B">
    <location>
        <begin position="1"/>
        <end position="235"/>
    </location>
</feature>
<feature type="active site" description="Nucleophile" evidence="1">
    <location>
        <position position="48"/>
    </location>
</feature>
<comment type="function">
    <text evidence="1">Responsible for synthesis of pseudouridine from uracil-55 in the psi GC loop of transfer RNAs.</text>
</comment>
<comment type="catalytic activity">
    <reaction evidence="1">
        <text>uridine(55) in tRNA = pseudouridine(55) in tRNA</text>
        <dbReference type="Rhea" id="RHEA:42532"/>
        <dbReference type="Rhea" id="RHEA-COMP:10101"/>
        <dbReference type="Rhea" id="RHEA-COMP:10102"/>
        <dbReference type="ChEBI" id="CHEBI:65314"/>
        <dbReference type="ChEBI" id="CHEBI:65315"/>
        <dbReference type="EC" id="5.4.99.25"/>
    </reaction>
</comment>
<comment type="similarity">
    <text evidence="1">Belongs to the pseudouridine synthase TruB family. Type 1 subfamily.</text>
</comment>
<evidence type="ECO:0000255" key="1">
    <source>
        <dbReference type="HAMAP-Rule" id="MF_01080"/>
    </source>
</evidence>
<sequence>MNFKEGEVLYFDKPLKWTSFAVVNKIRYHICRKLGVKKIKVGHAGTLDPLATGVMIICTGKATKRIEEFQYHTKEYIATLQLGATTPSFDLEKEIDATYPTEHITRELVEEALQRFIGRIEQIPPVFSACKVDGKRAYDLARKGEDVELKAKTLIIDEIELLECNLPEIKIRVVCSKGTYIRALARDIGEALNSGAHLTGLIRTRVGDVRLEDCLSVESFPEWLDQQEIEEVINE</sequence>
<reference key="1">
    <citation type="journal article" date="2007" name="PLoS Biol.">
        <title>Evolution of symbiotic bacteria in the distal human intestine.</title>
        <authorList>
            <person name="Xu J."/>
            <person name="Mahowald M.A."/>
            <person name="Ley R.E."/>
            <person name="Lozupone C.A."/>
            <person name="Hamady M."/>
            <person name="Martens E.C."/>
            <person name="Henrissat B."/>
            <person name="Coutinho P.M."/>
            <person name="Minx P."/>
            <person name="Latreille P."/>
            <person name="Cordum H."/>
            <person name="Van Brunt A."/>
            <person name="Kim K."/>
            <person name="Fulton R.S."/>
            <person name="Fulton L.A."/>
            <person name="Clifton S.W."/>
            <person name="Wilson R.K."/>
            <person name="Knight R.D."/>
            <person name="Gordon J.I."/>
        </authorList>
    </citation>
    <scope>NUCLEOTIDE SEQUENCE [LARGE SCALE GENOMIC DNA]</scope>
    <source>
        <strain>ATCC 8482 / DSM 1447 / JCM 5826 / CCUG 4940 / NBRC 14291 / NCTC 11154</strain>
    </source>
</reference>
<name>TRUB_PHOV8</name>
<protein>
    <recommendedName>
        <fullName evidence="1">tRNA pseudouridine synthase B</fullName>
        <ecNumber evidence="1">5.4.99.25</ecNumber>
    </recommendedName>
    <alternativeName>
        <fullName evidence="1">tRNA pseudouridine(55) synthase</fullName>
        <shortName evidence="1">Psi55 synthase</shortName>
    </alternativeName>
    <alternativeName>
        <fullName evidence="1">tRNA pseudouridylate synthase</fullName>
    </alternativeName>
    <alternativeName>
        <fullName evidence="1">tRNA-uridine isomerase</fullName>
    </alternativeName>
</protein>
<dbReference type="EC" id="5.4.99.25" evidence="1"/>
<dbReference type="EMBL" id="CP000139">
    <property type="protein sequence ID" value="ABR38863.1"/>
    <property type="molecule type" value="Genomic_DNA"/>
</dbReference>
<dbReference type="RefSeq" id="WP_005844015.1">
    <property type="nucleotide sequence ID" value="NZ_JANSWM010000115.1"/>
</dbReference>
<dbReference type="SMR" id="A6KZJ9"/>
<dbReference type="STRING" id="435590.BVU_1172"/>
<dbReference type="PaxDb" id="435590-BVU_1172"/>
<dbReference type="GeneID" id="93449541"/>
<dbReference type="KEGG" id="bvu:BVU_1172"/>
<dbReference type="eggNOG" id="COG0130">
    <property type="taxonomic scope" value="Bacteria"/>
</dbReference>
<dbReference type="HOGENOM" id="CLU_032087_2_0_10"/>
<dbReference type="BioCyc" id="BVUL435590:G1G59-1219-MONOMER"/>
<dbReference type="Proteomes" id="UP000002861">
    <property type="component" value="Chromosome"/>
</dbReference>
<dbReference type="GO" id="GO:0003723">
    <property type="term" value="F:RNA binding"/>
    <property type="evidence" value="ECO:0007669"/>
    <property type="project" value="InterPro"/>
</dbReference>
<dbReference type="GO" id="GO:0160148">
    <property type="term" value="F:tRNA pseudouridine(55) synthase activity"/>
    <property type="evidence" value="ECO:0007669"/>
    <property type="project" value="UniProtKB-EC"/>
</dbReference>
<dbReference type="GO" id="GO:1990481">
    <property type="term" value="P:mRNA pseudouridine synthesis"/>
    <property type="evidence" value="ECO:0007669"/>
    <property type="project" value="TreeGrafter"/>
</dbReference>
<dbReference type="GO" id="GO:0031119">
    <property type="term" value="P:tRNA pseudouridine synthesis"/>
    <property type="evidence" value="ECO:0007669"/>
    <property type="project" value="UniProtKB-UniRule"/>
</dbReference>
<dbReference type="CDD" id="cd02573">
    <property type="entry name" value="PseudoU_synth_EcTruB"/>
    <property type="match status" value="1"/>
</dbReference>
<dbReference type="Gene3D" id="3.30.2350.10">
    <property type="entry name" value="Pseudouridine synthase"/>
    <property type="match status" value="1"/>
</dbReference>
<dbReference type="HAMAP" id="MF_01080">
    <property type="entry name" value="TruB_bact"/>
    <property type="match status" value="1"/>
</dbReference>
<dbReference type="InterPro" id="IPR020103">
    <property type="entry name" value="PsdUridine_synth_cat_dom_sf"/>
</dbReference>
<dbReference type="InterPro" id="IPR002501">
    <property type="entry name" value="PsdUridine_synth_N"/>
</dbReference>
<dbReference type="InterPro" id="IPR014780">
    <property type="entry name" value="tRNA_psdUridine_synth_TruB"/>
</dbReference>
<dbReference type="InterPro" id="IPR032819">
    <property type="entry name" value="TruB_C"/>
</dbReference>
<dbReference type="NCBIfam" id="TIGR00431">
    <property type="entry name" value="TruB"/>
    <property type="match status" value="1"/>
</dbReference>
<dbReference type="PANTHER" id="PTHR13767:SF2">
    <property type="entry name" value="PSEUDOURIDYLATE SYNTHASE TRUB1"/>
    <property type="match status" value="1"/>
</dbReference>
<dbReference type="PANTHER" id="PTHR13767">
    <property type="entry name" value="TRNA-PSEUDOURIDINE SYNTHASE"/>
    <property type="match status" value="1"/>
</dbReference>
<dbReference type="Pfam" id="PF16198">
    <property type="entry name" value="TruB_C_2"/>
    <property type="match status" value="1"/>
</dbReference>
<dbReference type="Pfam" id="PF01509">
    <property type="entry name" value="TruB_N"/>
    <property type="match status" value="1"/>
</dbReference>
<dbReference type="SUPFAM" id="SSF55120">
    <property type="entry name" value="Pseudouridine synthase"/>
    <property type="match status" value="1"/>
</dbReference>
<gene>
    <name evidence="1" type="primary">truB</name>
    <name type="ordered locus">BVU_1172</name>
</gene>
<organism>
    <name type="scientific">Phocaeicola vulgatus (strain ATCC 8482 / DSM 1447 / JCM 5826 / CCUG 4940 / NBRC 14291 / NCTC 11154)</name>
    <name type="common">Bacteroides vulgatus</name>
    <dbReference type="NCBI Taxonomy" id="435590"/>
    <lineage>
        <taxon>Bacteria</taxon>
        <taxon>Pseudomonadati</taxon>
        <taxon>Bacteroidota</taxon>
        <taxon>Bacteroidia</taxon>
        <taxon>Bacteroidales</taxon>
        <taxon>Bacteroidaceae</taxon>
        <taxon>Phocaeicola</taxon>
    </lineage>
</organism>
<keyword id="KW-0413">Isomerase</keyword>
<keyword id="KW-0819">tRNA processing</keyword>
<accession>A6KZJ9</accession>